<accession>P81401</accession>
<accession>Q0VC69</accession>
<accession>Q8MI77</accession>
<dbReference type="EMBL" id="AF503910">
    <property type="protein sequence ID" value="AAM28152.1"/>
    <property type="molecule type" value="mRNA"/>
</dbReference>
<dbReference type="EMBL" id="BC120324">
    <property type="protein sequence ID" value="AAI20325.1"/>
    <property type="molecule type" value="mRNA"/>
</dbReference>
<dbReference type="RefSeq" id="NP_776395.1">
    <property type="nucleotide sequence ID" value="NM_173970.3"/>
</dbReference>
<dbReference type="SMR" id="P81401"/>
<dbReference type="FunCoup" id="P81401">
    <property type="interactions" value="55"/>
</dbReference>
<dbReference type="STRING" id="9913.ENSBTAP00000017827"/>
<dbReference type="PaxDb" id="9913-ENSBTAP00000017827"/>
<dbReference type="Ensembl" id="ENSBTAT00000017827.4">
    <property type="protein sequence ID" value="ENSBTAP00000017827.3"/>
    <property type="gene ID" value="ENSBTAG00000013400.4"/>
</dbReference>
<dbReference type="GeneID" id="280956"/>
<dbReference type="KEGG" id="bta:280956"/>
<dbReference type="CTD" id="7432"/>
<dbReference type="VEuPathDB" id="HostDB:ENSBTAG00000013400"/>
<dbReference type="VGNC" id="VGNC:36797">
    <property type="gene designation" value="VIP"/>
</dbReference>
<dbReference type="eggNOG" id="ENOG502QVTA">
    <property type="taxonomic scope" value="Eukaryota"/>
</dbReference>
<dbReference type="GeneTree" id="ENSGT00950000183154"/>
<dbReference type="HOGENOM" id="CLU_133877_1_0_1"/>
<dbReference type="InParanoid" id="P81401"/>
<dbReference type="OMA" id="MEVRSKP"/>
<dbReference type="OrthoDB" id="8795594at2759"/>
<dbReference type="TreeFam" id="TF332804"/>
<dbReference type="Reactome" id="R-BTA-418555">
    <property type="pathway name" value="G alpha (s) signalling events"/>
</dbReference>
<dbReference type="Reactome" id="R-BTA-420092">
    <property type="pathway name" value="Glucagon-type ligand receptors"/>
</dbReference>
<dbReference type="Proteomes" id="UP000009136">
    <property type="component" value="Chromosome 9"/>
</dbReference>
<dbReference type="Bgee" id="ENSBTAG00000013400">
    <property type="expression patterns" value="Expressed in caecum and 40 other cell types or tissues"/>
</dbReference>
<dbReference type="GO" id="GO:0005615">
    <property type="term" value="C:extracellular space"/>
    <property type="evidence" value="ECO:0007669"/>
    <property type="project" value="Ensembl"/>
</dbReference>
<dbReference type="GO" id="GO:0043005">
    <property type="term" value="C:neuron projection"/>
    <property type="evidence" value="ECO:0000318"/>
    <property type="project" value="GO_Central"/>
</dbReference>
<dbReference type="GO" id="GO:0005179">
    <property type="term" value="F:hormone activity"/>
    <property type="evidence" value="ECO:0000314"/>
    <property type="project" value="BHF-UCL"/>
</dbReference>
<dbReference type="GO" id="GO:0005184">
    <property type="term" value="F:neuropeptide hormone activity"/>
    <property type="evidence" value="ECO:0000250"/>
    <property type="project" value="UniProtKB"/>
</dbReference>
<dbReference type="GO" id="GO:0051428">
    <property type="term" value="F:peptide hormone receptor binding"/>
    <property type="evidence" value="ECO:0000318"/>
    <property type="project" value="GO_Central"/>
</dbReference>
<dbReference type="GO" id="GO:0031891">
    <property type="term" value="F:type 1 vasoactive intestinal polypeptide receptor binding"/>
    <property type="evidence" value="ECO:0000250"/>
    <property type="project" value="UniProtKB"/>
</dbReference>
<dbReference type="GO" id="GO:0031892">
    <property type="term" value="F:type 2 vasoactive intestinal polypeptide receptor binding"/>
    <property type="evidence" value="ECO:0007669"/>
    <property type="project" value="Ensembl"/>
</dbReference>
<dbReference type="GO" id="GO:0007189">
    <property type="term" value="P:adenylate cyclase-activating G protein-coupled receptor signaling pathway"/>
    <property type="evidence" value="ECO:0000314"/>
    <property type="project" value="BHF-UCL"/>
</dbReference>
<dbReference type="GO" id="GO:0048242">
    <property type="term" value="P:epinephrine secretion"/>
    <property type="evidence" value="ECO:0000318"/>
    <property type="project" value="GO_Central"/>
</dbReference>
<dbReference type="GO" id="GO:0048255">
    <property type="term" value="P:mRNA stabilization"/>
    <property type="evidence" value="ECO:0000250"/>
    <property type="project" value="AgBase"/>
</dbReference>
<dbReference type="GO" id="GO:0045732">
    <property type="term" value="P:positive regulation of protein catabolic process"/>
    <property type="evidence" value="ECO:0000314"/>
    <property type="project" value="BHF-UCL"/>
</dbReference>
<dbReference type="GO" id="GO:0070459">
    <property type="term" value="P:prolactin secretion"/>
    <property type="evidence" value="ECO:0000250"/>
    <property type="project" value="AgBase"/>
</dbReference>
<dbReference type="GO" id="GO:0032880">
    <property type="term" value="P:regulation of protein localization"/>
    <property type="evidence" value="ECO:0000314"/>
    <property type="project" value="BHF-UCL"/>
</dbReference>
<dbReference type="Gene3D" id="6.10.250.590">
    <property type="match status" value="2"/>
</dbReference>
<dbReference type="InterPro" id="IPR000532">
    <property type="entry name" value="Glucagon_GIP_secretin_VIP"/>
</dbReference>
<dbReference type="InterPro" id="IPR046963">
    <property type="entry name" value="VIP/GHRH-like"/>
</dbReference>
<dbReference type="PANTHER" id="PTHR11213">
    <property type="entry name" value="GLUCAGON-FAMILY NEUROPEPTIDE"/>
    <property type="match status" value="1"/>
</dbReference>
<dbReference type="PANTHER" id="PTHR11213:SF5">
    <property type="entry name" value="VIP PEPTIDES"/>
    <property type="match status" value="1"/>
</dbReference>
<dbReference type="Pfam" id="PF00123">
    <property type="entry name" value="Hormone_2"/>
    <property type="match status" value="2"/>
</dbReference>
<dbReference type="SMART" id="SM00070">
    <property type="entry name" value="GLUCA"/>
    <property type="match status" value="2"/>
</dbReference>
<dbReference type="PROSITE" id="PS00260">
    <property type="entry name" value="GLUCAGON"/>
    <property type="match status" value="2"/>
</dbReference>
<sequence>METRSKPQLLVFLTLFSVLFSQTLAWPLFGAPSALRMGDRIPFEGANEPDQVSLKADTDILQDALAENDTPYYDVSRNVRHADGVFTSDYSRLLGQLSAKKYLESLIGKRVSNSISEDQGPIKRHSDAVFTDNYTRLRKQMAVKKYLNSILNGKRSSEGESPDFLEELEK</sequence>
<evidence type="ECO:0000250" key="1">
    <source>
        <dbReference type="UniProtKB" id="P01282"/>
    </source>
</evidence>
<evidence type="ECO:0000250" key="2">
    <source>
        <dbReference type="UniProtKB" id="P01283"/>
    </source>
</evidence>
<evidence type="ECO:0000255" key="3"/>
<evidence type="ECO:0000269" key="4">
    <source>
    </source>
</evidence>
<evidence type="ECO:0000269" key="5">
    <source>
    </source>
</evidence>
<evidence type="ECO:0000305" key="6"/>
<protein>
    <recommendedName>
        <fullName>VIP peptides</fullName>
    </recommendedName>
    <component>
        <recommendedName>
            <fullName>Intestinal peptide PHI-27</fullName>
        </recommendedName>
        <alternativeName>
            <fullName>Peptide histidine isoleucinamide 27</fullName>
        </alternativeName>
    </component>
    <component>
        <recommendedName>
            <fullName>Vasoactive intestinal peptide</fullName>
            <shortName>VIP</shortName>
        </recommendedName>
        <alternativeName>
            <fullName>Vasoactive intestinal polypeptide</fullName>
        </alternativeName>
    </component>
</protein>
<reference key="1">
    <citation type="journal article" date="2002" name="J. Neurosci.">
        <title>Coincident elevation of cAMP and calcium influx by PACAP-27 synergistically regulates vasoactive intestinal polypeptide gene transcription through a novel PKA-independent signaling pathway.</title>
        <authorList>
            <person name="Hamelink C."/>
            <person name="Lee H.-W."/>
            <person name="Chen Y."/>
            <person name="Grimaldi M."/>
            <person name="Eiden L.E."/>
        </authorList>
    </citation>
    <scope>NUCLEOTIDE SEQUENCE [MRNA]</scope>
</reference>
<reference key="2">
    <citation type="submission" date="2006-08" db="EMBL/GenBank/DDBJ databases">
        <authorList>
            <consortium name="NIH - Mammalian Gene Collection (MGC) project"/>
        </authorList>
    </citation>
    <scope>NUCLEOTIDE SEQUENCE [LARGE SCALE MRNA]</scope>
    <source>
        <strain>Hereford</strain>
        <tissue>Brain cortex</tissue>
    </source>
</reference>
<reference key="3">
    <citation type="journal article" date="1984" name="Eur. J. Biochem.">
        <title>A novel form of the polypeptide PHI isolated in high yield from bovine upper intestine. Relationships to other peptides of the glucagon-secretin family.</title>
        <authorList>
            <person name="Carlquist M."/>
            <person name="Kaiser R."/>
            <person name="Tatemoto K."/>
            <person name="Joernvall H."/>
            <person name="Mutt V."/>
        </authorList>
    </citation>
    <scope>PROTEIN SEQUENCE OF 81-107</scope>
    <scope>AMIDATION AT ILE-107</scope>
    <source>
        <tissue>Duodenum</tissue>
    </source>
</reference>
<reference key="4">
    <citation type="journal article" date="1979" name="FEBS Lett.">
        <title>Isolation and characterization of bovine vasoactive intestinal peptide (VIP).</title>
        <authorList>
            <person name="Carlquist M."/>
            <person name="Mutt V."/>
            <person name="Joernvall H."/>
        </authorList>
    </citation>
    <scope>PROTEIN SEQUENCE OF 125-152</scope>
    <scope>AMIDATION AT ASN-152</scope>
    <source>
        <tissue>Intestine</tissue>
    </source>
</reference>
<name>VIP_BOVIN</name>
<keyword id="KW-0027">Amidation</keyword>
<keyword id="KW-0165">Cleavage on pair of basic residues</keyword>
<keyword id="KW-0903">Direct protein sequencing</keyword>
<keyword id="KW-0372">Hormone</keyword>
<keyword id="KW-0597">Phosphoprotein</keyword>
<keyword id="KW-1185">Reference proteome</keyword>
<keyword id="KW-0964">Secreted</keyword>
<keyword id="KW-0732">Signal</keyword>
<gene>
    <name type="primary">VIP</name>
</gene>
<feature type="signal peptide" evidence="3">
    <location>
        <begin position="1"/>
        <end position="25"/>
    </location>
</feature>
<feature type="propeptide" id="PRO_0000011450">
    <location>
        <begin position="26"/>
        <end position="79"/>
    </location>
</feature>
<feature type="peptide" id="PRO_0000011451" description="Intestinal peptide PHI-27">
    <location>
        <begin position="81"/>
        <end position="107"/>
    </location>
</feature>
<feature type="propeptide" id="PRO_0000011452">
    <location>
        <begin position="111"/>
        <end position="122"/>
    </location>
</feature>
<feature type="peptide" id="PRO_0000011453" description="Vasoactive intestinal peptide">
    <location>
        <begin position="125"/>
        <end position="152"/>
    </location>
</feature>
<feature type="propeptide" id="PRO_0000011454">
    <location>
        <begin position="156"/>
        <end position="170"/>
    </location>
</feature>
<feature type="modified residue" description="Phosphoserine" evidence="2">
    <location>
        <position position="76"/>
    </location>
</feature>
<feature type="modified residue" description="Isoleucine amide" evidence="5">
    <location>
        <position position="107"/>
    </location>
</feature>
<feature type="modified residue" description="Asparagine amide" evidence="4">
    <location>
        <position position="152"/>
    </location>
</feature>
<proteinExistence type="evidence at protein level"/>
<comment type="function">
    <molecule>Vasoactive intestinal peptide</molecule>
    <text evidence="1">VIP is a neuropeptide involved in a diverse array of physiological processes through activating the PACAP subfamily of class B1 G protein-coupled receptors: VIP receptor 1 (VPR1) and VIP receptor 2 (VPR2). Abundantly expressed throughout the CNS and peripheral nervous systems where they primarily exert neuroprotective and immune modulatory roles (By similarity). Also causes vasodilation, lowers arterial blood pressure, stimulates myocardial contractility, increases glycogenolysis and relaxes the smooth muscle of trachea, stomach and gall bladder (By similarity).</text>
</comment>
<comment type="function">
    <molecule>Intestinal peptide PHI-27</molecule>
    <text evidence="1">PHM-27 is a bioactive form from proteolysis of the same precursor protein, that causes vasodilation. It is a potent agonist of the calcitonin receptor CALCR, with similar efficacy as calcitonin.</text>
</comment>
<comment type="subcellular location">
    <subcellularLocation>
        <location>Secreted</location>
    </subcellularLocation>
</comment>
<comment type="miscellaneous">
    <text>X's at positions 28 to 44 were included by homology with the human precursor sequence.</text>
</comment>
<comment type="similarity">
    <text evidence="6">Belongs to the glucagon family.</text>
</comment>
<organism>
    <name type="scientific">Bos taurus</name>
    <name type="common">Bovine</name>
    <dbReference type="NCBI Taxonomy" id="9913"/>
    <lineage>
        <taxon>Eukaryota</taxon>
        <taxon>Metazoa</taxon>
        <taxon>Chordata</taxon>
        <taxon>Craniata</taxon>
        <taxon>Vertebrata</taxon>
        <taxon>Euteleostomi</taxon>
        <taxon>Mammalia</taxon>
        <taxon>Eutheria</taxon>
        <taxon>Laurasiatheria</taxon>
        <taxon>Artiodactyla</taxon>
        <taxon>Ruminantia</taxon>
        <taxon>Pecora</taxon>
        <taxon>Bovidae</taxon>
        <taxon>Bovinae</taxon>
        <taxon>Bos</taxon>
    </lineage>
</organism>